<gene>
    <name type="primary">Ipo11</name>
    <name type="synonym">Ranbp11</name>
</gene>
<comment type="function">
    <text evidence="1 4">Functions in nuclear protein import as nuclear transport receptor. Serves as receptor for nuclear localization signals (NLS) in cargo substrates. Is thought to mediate docking of the importin/substrate complex to the nuclear pore complex (NPC) through binding to nucleoporin and the complex is subsequently translocated through the pore by an energy requiring, Ran-dependent mechanism. At the nucleoplasmic side of the NPC, Ran binds to the importin, the importin/substrate complex dissociates and importin is re-exported from the nucleus to the cytoplasm where GTP hydrolysis releases Ran. The directionality of nuclear import is thought to be conferred by an asymmetric distribution of the GTP- and GDP-bound forms of Ran between the cytoplasm and nucleus (By similarity). Mediates the nuclear import of RPL12, and of UBE2E3 (By similarity).</text>
</comment>
<comment type="subunit">
    <text evidence="4">Interacts with UBE2E3 and RPL12.</text>
</comment>
<comment type="subcellular location">
    <subcellularLocation>
        <location evidence="1">Cytoplasm</location>
    </subcellularLocation>
    <subcellularLocation>
        <location evidence="1">Nucleus</location>
    </subcellularLocation>
</comment>
<comment type="alternative products">
    <event type="alternative splicing"/>
    <isoform>
        <id>Q8K2V6-1</id>
        <name>1</name>
        <sequence type="displayed"/>
    </isoform>
    <isoform>
        <id>Q8K2V6-2</id>
        <name>2</name>
        <sequence type="described" ref="VSP_010935"/>
    </isoform>
</comment>
<comment type="similarity">
    <text evidence="6">Belongs to the importin beta family.</text>
</comment>
<reference key="1">
    <citation type="journal article" date="2004" name="Genome Res.">
        <title>The status, quality, and expansion of the NIH full-length cDNA project: the Mammalian Gene Collection (MGC).</title>
        <authorList>
            <consortium name="The MGC Project Team"/>
        </authorList>
    </citation>
    <scope>NUCLEOTIDE SEQUENCE [LARGE SCALE MRNA] (ISOFORMS 1 AND 2)</scope>
    <source>
        <tissue>Retina</tissue>
    </source>
</reference>
<reference key="2">
    <citation type="journal article" date="2005" name="Science">
        <title>The transcriptional landscape of the mammalian genome.</title>
        <authorList>
            <person name="Carninci P."/>
            <person name="Kasukawa T."/>
            <person name="Katayama S."/>
            <person name="Gough J."/>
            <person name="Frith M.C."/>
            <person name="Maeda N."/>
            <person name="Oyama R."/>
            <person name="Ravasi T."/>
            <person name="Lenhard B."/>
            <person name="Wells C."/>
            <person name="Kodzius R."/>
            <person name="Shimokawa K."/>
            <person name="Bajic V.B."/>
            <person name="Brenner S.E."/>
            <person name="Batalov S."/>
            <person name="Forrest A.R."/>
            <person name="Zavolan M."/>
            <person name="Davis M.J."/>
            <person name="Wilming L.G."/>
            <person name="Aidinis V."/>
            <person name="Allen J.E."/>
            <person name="Ambesi-Impiombato A."/>
            <person name="Apweiler R."/>
            <person name="Aturaliya R.N."/>
            <person name="Bailey T.L."/>
            <person name="Bansal M."/>
            <person name="Baxter L."/>
            <person name="Beisel K.W."/>
            <person name="Bersano T."/>
            <person name="Bono H."/>
            <person name="Chalk A.M."/>
            <person name="Chiu K.P."/>
            <person name="Choudhary V."/>
            <person name="Christoffels A."/>
            <person name="Clutterbuck D.R."/>
            <person name="Crowe M.L."/>
            <person name="Dalla E."/>
            <person name="Dalrymple B.P."/>
            <person name="de Bono B."/>
            <person name="Della Gatta G."/>
            <person name="di Bernardo D."/>
            <person name="Down T."/>
            <person name="Engstrom P."/>
            <person name="Fagiolini M."/>
            <person name="Faulkner G."/>
            <person name="Fletcher C.F."/>
            <person name="Fukushima T."/>
            <person name="Furuno M."/>
            <person name="Futaki S."/>
            <person name="Gariboldi M."/>
            <person name="Georgii-Hemming P."/>
            <person name="Gingeras T.R."/>
            <person name="Gojobori T."/>
            <person name="Green R.E."/>
            <person name="Gustincich S."/>
            <person name="Harbers M."/>
            <person name="Hayashi Y."/>
            <person name="Hensch T.K."/>
            <person name="Hirokawa N."/>
            <person name="Hill D."/>
            <person name="Huminiecki L."/>
            <person name="Iacono M."/>
            <person name="Ikeo K."/>
            <person name="Iwama A."/>
            <person name="Ishikawa T."/>
            <person name="Jakt M."/>
            <person name="Kanapin A."/>
            <person name="Katoh M."/>
            <person name="Kawasawa Y."/>
            <person name="Kelso J."/>
            <person name="Kitamura H."/>
            <person name="Kitano H."/>
            <person name="Kollias G."/>
            <person name="Krishnan S.P."/>
            <person name="Kruger A."/>
            <person name="Kummerfeld S.K."/>
            <person name="Kurochkin I.V."/>
            <person name="Lareau L.F."/>
            <person name="Lazarevic D."/>
            <person name="Lipovich L."/>
            <person name="Liu J."/>
            <person name="Liuni S."/>
            <person name="McWilliam S."/>
            <person name="Madan Babu M."/>
            <person name="Madera M."/>
            <person name="Marchionni L."/>
            <person name="Matsuda H."/>
            <person name="Matsuzawa S."/>
            <person name="Miki H."/>
            <person name="Mignone F."/>
            <person name="Miyake S."/>
            <person name="Morris K."/>
            <person name="Mottagui-Tabar S."/>
            <person name="Mulder N."/>
            <person name="Nakano N."/>
            <person name="Nakauchi H."/>
            <person name="Ng P."/>
            <person name="Nilsson R."/>
            <person name="Nishiguchi S."/>
            <person name="Nishikawa S."/>
            <person name="Nori F."/>
            <person name="Ohara O."/>
            <person name="Okazaki Y."/>
            <person name="Orlando V."/>
            <person name="Pang K.C."/>
            <person name="Pavan W.J."/>
            <person name="Pavesi G."/>
            <person name="Pesole G."/>
            <person name="Petrovsky N."/>
            <person name="Piazza S."/>
            <person name="Reed J."/>
            <person name="Reid J.F."/>
            <person name="Ring B.Z."/>
            <person name="Ringwald M."/>
            <person name="Rost B."/>
            <person name="Ruan Y."/>
            <person name="Salzberg S.L."/>
            <person name="Sandelin A."/>
            <person name="Schneider C."/>
            <person name="Schoenbach C."/>
            <person name="Sekiguchi K."/>
            <person name="Semple C.A."/>
            <person name="Seno S."/>
            <person name="Sessa L."/>
            <person name="Sheng Y."/>
            <person name="Shibata Y."/>
            <person name="Shimada H."/>
            <person name="Shimada K."/>
            <person name="Silva D."/>
            <person name="Sinclair B."/>
            <person name="Sperling S."/>
            <person name="Stupka E."/>
            <person name="Sugiura K."/>
            <person name="Sultana R."/>
            <person name="Takenaka Y."/>
            <person name="Taki K."/>
            <person name="Tammoja K."/>
            <person name="Tan S.L."/>
            <person name="Tang S."/>
            <person name="Taylor M.S."/>
            <person name="Tegner J."/>
            <person name="Teichmann S.A."/>
            <person name="Ueda H.R."/>
            <person name="van Nimwegen E."/>
            <person name="Verardo R."/>
            <person name="Wei C.L."/>
            <person name="Yagi K."/>
            <person name="Yamanishi H."/>
            <person name="Zabarovsky E."/>
            <person name="Zhu S."/>
            <person name="Zimmer A."/>
            <person name="Hide W."/>
            <person name="Bult C."/>
            <person name="Grimmond S.M."/>
            <person name="Teasdale R.D."/>
            <person name="Liu E.T."/>
            <person name="Brusic V."/>
            <person name="Quackenbush J."/>
            <person name="Wahlestedt C."/>
            <person name="Mattick J.S."/>
            <person name="Hume D.A."/>
            <person name="Kai C."/>
            <person name="Sasaki D."/>
            <person name="Tomaru Y."/>
            <person name="Fukuda S."/>
            <person name="Kanamori-Katayama M."/>
            <person name="Suzuki M."/>
            <person name="Aoki J."/>
            <person name="Arakawa T."/>
            <person name="Iida J."/>
            <person name="Imamura K."/>
            <person name="Itoh M."/>
            <person name="Kato T."/>
            <person name="Kawaji H."/>
            <person name="Kawagashira N."/>
            <person name="Kawashima T."/>
            <person name="Kojima M."/>
            <person name="Kondo S."/>
            <person name="Konno H."/>
            <person name="Nakano K."/>
            <person name="Ninomiya N."/>
            <person name="Nishio T."/>
            <person name="Okada M."/>
            <person name="Plessy C."/>
            <person name="Shibata K."/>
            <person name="Shiraki T."/>
            <person name="Suzuki S."/>
            <person name="Tagami M."/>
            <person name="Waki K."/>
            <person name="Watahiki A."/>
            <person name="Okamura-Oho Y."/>
            <person name="Suzuki H."/>
            <person name="Kawai J."/>
            <person name="Hayashizaki Y."/>
        </authorList>
    </citation>
    <scope>NUCLEOTIDE SEQUENCE [LARGE SCALE MRNA] OF 1-842 (ISOFORM 1)</scope>
    <source>
        <strain>C57BL/6J</strain>
        <tissue>Ovary</tissue>
    </source>
</reference>
<reference key="3">
    <citation type="journal article" date="2002" name="Mol. Cell. Biol.">
        <title>Ribosomal protein L12 uses a distinct nuclear import pathway mediated by importin 11.</title>
        <authorList>
            <person name="Plafker S.M."/>
            <person name="Macara I.G."/>
        </authorList>
    </citation>
    <scope>FUNCTION</scope>
    <scope>INTERACTION WITH RPL12</scope>
</reference>
<reference key="4">
    <citation type="journal article" date="2010" name="Cell">
        <title>A tissue-specific atlas of mouse protein phosphorylation and expression.</title>
        <authorList>
            <person name="Huttlin E.L."/>
            <person name="Jedrychowski M.P."/>
            <person name="Elias J.E."/>
            <person name="Goswami T."/>
            <person name="Rad R."/>
            <person name="Beausoleil S.A."/>
            <person name="Villen J."/>
            <person name="Haas W."/>
            <person name="Sowa M.E."/>
            <person name="Gygi S.P."/>
        </authorList>
    </citation>
    <scope>IDENTIFICATION BY MASS SPECTROMETRY [LARGE SCALE ANALYSIS]</scope>
    <source>
        <tissue>Heart</tissue>
        <tissue>Kidney</tissue>
        <tissue>Lung</tissue>
        <tissue>Spleen</tissue>
        <tissue>Testis</tissue>
    </source>
</reference>
<accession>Q8K2V6</accession>
<accession>Q8BU45</accession>
<accession>Q8K0B4</accession>
<keyword id="KW-0007">Acetylation</keyword>
<keyword id="KW-0025">Alternative splicing</keyword>
<keyword id="KW-0963">Cytoplasm</keyword>
<keyword id="KW-0539">Nucleus</keyword>
<keyword id="KW-0597">Phosphoprotein</keyword>
<keyword id="KW-0653">Protein transport</keyword>
<keyword id="KW-1185">Reference proteome</keyword>
<keyword id="KW-0677">Repeat</keyword>
<keyword id="KW-0813">Transport</keyword>
<sequence>MDLNSASSVVLQVLTQATSQDTAVLKPAEEQLKQWETQPGFYSVLLNIFTNHTLDINVRWLAVLYFKHGIDRYWRRVAPHALSEEEKSTLRAGLITNFNEPINQIATQIAVLIAKVARLDCPRQWPELIPTLVESVKVQDDLRQHRALLTFYHVTKTLASKRLAADRKLFYDLASGIYNFACSLWNHHTDTFLQHVSSGNEAAVLSSLERTLLSLKVLRKLTVNGFVEPHKNMEVMGFLHGIFERLKQFLECSRSIGTDNVCRDRLEKTIILFTKVLLDFLDQHPISFTPLIQRSLEFSVSYVFTEVGEGVTFERFIVQCMNLIKMIVKNYAYKPSKNFEDSSPETLEAHKIKMAFFTYPTLTEICRRLVSHYFLLTEEELTMWEEDPEGFTVEETGGDSWKYSLRPCTEVLFIDIFHEYNQTLTPVLLEMMQTLEGPTNVEDMNALLIKDAVYNAVGLAAFELFDSVDFDQWFKTQLLPELQVSHNRYKPLRRRVIWLIGQWISVKFKSDLRPMLYEAICNLLQDQDLVVRIETATTLKLTVDDFEFRTDQFLPYLETMFTLLFQLLQQVTECDTKMHVLHVLSCVIERVNVQIRPYVGCLVQYLPLLWKQSEEHNMLRCAILTTLIHLVQGLGADSKNLYPFLLPVIQLSTDVSQPPHVYLLEDGLELWLVTLENSPCVTPELLRIFQNMSPLLELSSENLRTCFKIINGYIFLSSTEFLQTYAAGLCQSFYELLPEITTEGQVQVLKVVENALKVNPVLGPQMFQRILPCVFRGVIEGERYPVVMSIYLAVMGRVLLQNTSFFSSLLNEMGHEFNQEMDQLLGNVIEMWVDRMDNITQPERKKLSALALLSLLPSDNSVIQDKFCGIINISVEALHDVMTEDPETRTYKDCMLMSQHEEPKVTEDEEPPTEQDKRKKMLALKDPVHTVSLQQFIYEKLKAQQEILGEQGFQSLMETVDTEIVTQLQEFLQGF</sequence>
<dbReference type="EMBL" id="BC029746">
    <property type="protein sequence ID" value="AAH29746.1"/>
    <property type="molecule type" value="mRNA"/>
</dbReference>
<dbReference type="EMBL" id="BC031900">
    <property type="protein sequence ID" value="AAH31900.1"/>
    <property type="molecule type" value="mRNA"/>
</dbReference>
<dbReference type="EMBL" id="AK087793">
    <property type="protein sequence ID" value="BAC40005.1"/>
    <property type="molecule type" value="mRNA"/>
</dbReference>
<dbReference type="CCDS" id="CCDS36776.1">
    <molecule id="Q8K2V6-1"/>
</dbReference>
<dbReference type="CCDS" id="CCDS88519.1">
    <molecule id="Q8K2V6-2"/>
</dbReference>
<dbReference type="RefSeq" id="NP_001347826.1">
    <molecule id="Q8K2V6-2"/>
    <property type="nucleotide sequence ID" value="NM_001360897.1"/>
</dbReference>
<dbReference type="RefSeq" id="NP_083941.2">
    <molecule id="Q8K2V6-1"/>
    <property type="nucleotide sequence ID" value="NM_029665.3"/>
</dbReference>
<dbReference type="RefSeq" id="XP_006517849.1">
    <property type="nucleotide sequence ID" value="XM_006517786.3"/>
</dbReference>
<dbReference type="SMR" id="Q8K2V6"/>
<dbReference type="BioGRID" id="218189">
    <property type="interactions" value="3"/>
</dbReference>
<dbReference type="FunCoup" id="Q8K2V6">
    <property type="interactions" value="4471"/>
</dbReference>
<dbReference type="IntAct" id="Q8K2V6">
    <property type="interactions" value="2"/>
</dbReference>
<dbReference type="MINT" id="Q8K2V6"/>
<dbReference type="STRING" id="10090.ENSMUSP00000079667"/>
<dbReference type="GlyGen" id="Q8K2V6">
    <property type="glycosylation" value="2 sites, 1 N-linked glycan (1 site), 1 O-linked glycan (1 site)"/>
</dbReference>
<dbReference type="iPTMnet" id="Q8K2V6"/>
<dbReference type="PhosphoSitePlus" id="Q8K2V6"/>
<dbReference type="SwissPalm" id="Q8K2V6"/>
<dbReference type="PaxDb" id="10090-ENSMUSP00000079667"/>
<dbReference type="PeptideAtlas" id="Q8K2V6"/>
<dbReference type="ProteomicsDB" id="269078">
    <molecule id="Q8K2V6-1"/>
</dbReference>
<dbReference type="ProteomicsDB" id="269079">
    <molecule id="Q8K2V6-2"/>
</dbReference>
<dbReference type="Pumba" id="Q8K2V6"/>
<dbReference type="Antibodypedia" id="23693">
    <property type="antibodies" value="208 antibodies from 26 providers"/>
</dbReference>
<dbReference type="DNASU" id="76582"/>
<dbReference type="Ensembl" id="ENSMUST00000080856.14">
    <molecule id="Q8K2V6-1"/>
    <property type="protein sequence ID" value="ENSMUSP00000079667.8"/>
    <property type="gene ID" value="ENSMUSG00000042590.18"/>
</dbReference>
<dbReference type="Ensembl" id="ENSMUST00000186033.7">
    <molecule id="Q8K2V6-2"/>
    <property type="protein sequence ID" value="ENSMUSP00000140046.2"/>
    <property type="gene ID" value="ENSMUSG00000042590.18"/>
</dbReference>
<dbReference type="GeneID" id="76582"/>
<dbReference type="KEGG" id="mmu:76582"/>
<dbReference type="UCSC" id="uc007rtx.1">
    <molecule id="Q8K2V6-1"/>
    <property type="organism name" value="mouse"/>
</dbReference>
<dbReference type="AGR" id="MGI:2442377"/>
<dbReference type="CTD" id="51194"/>
<dbReference type="MGI" id="MGI:2442377">
    <property type="gene designation" value="Ipo11"/>
</dbReference>
<dbReference type="VEuPathDB" id="HostDB:ENSMUSG00000042590"/>
<dbReference type="eggNOG" id="KOG1993">
    <property type="taxonomic scope" value="Eukaryota"/>
</dbReference>
<dbReference type="GeneTree" id="ENSGT00390000014071"/>
<dbReference type="HOGENOM" id="CLU_003886_0_0_1"/>
<dbReference type="InParanoid" id="Q8K2V6"/>
<dbReference type="OMA" id="SFHYVFH"/>
<dbReference type="PhylomeDB" id="Q8K2V6"/>
<dbReference type="TreeFam" id="TF324336"/>
<dbReference type="BioGRID-ORCS" id="76582">
    <property type="hits" value="27 hits in 79 CRISPR screens"/>
</dbReference>
<dbReference type="ChiTaRS" id="Ipo11">
    <property type="organism name" value="mouse"/>
</dbReference>
<dbReference type="PRO" id="PR:Q8K2V6"/>
<dbReference type="Proteomes" id="UP000000589">
    <property type="component" value="Chromosome 13"/>
</dbReference>
<dbReference type="RNAct" id="Q8K2V6">
    <property type="molecule type" value="protein"/>
</dbReference>
<dbReference type="Bgee" id="ENSMUSG00000042590">
    <property type="expression patterns" value="Expressed in floor plate of midbrain and 261 other cell types or tissues"/>
</dbReference>
<dbReference type="ExpressionAtlas" id="Q8K2V6">
    <property type="expression patterns" value="baseline and differential"/>
</dbReference>
<dbReference type="GO" id="GO:0005829">
    <property type="term" value="C:cytosol"/>
    <property type="evidence" value="ECO:0007669"/>
    <property type="project" value="Ensembl"/>
</dbReference>
<dbReference type="GO" id="GO:0005654">
    <property type="term" value="C:nucleoplasm"/>
    <property type="evidence" value="ECO:0007669"/>
    <property type="project" value="Ensembl"/>
</dbReference>
<dbReference type="GO" id="GO:0061608">
    <property type="term" value="F:nuclear import signal receptor activity"/>
    <property type="evidence" value="ECO:0000314"/>
    <property type="project" value="MGI"/>
</dbReference>
<dbReference type="GO" id="GO:0031267">
    <property type="term" value="F:small GTPase binding"/>
    <property type="evidence" value="ECO:0007669"/>
    <property type="project" value="InterPro"/>
</dbReference>
<dbReference type="GO" id="GO:0006610">
    <property type="term" value="P:ribosomal protein import into nucleus"/>
    <property type="evidence" value="ECO:0000314"/>
    <property type="project" value="MGI"/>
</dbReference>
<dbReference type="FunFam" id="1.25.10.10:FF:000116">
    <property type="entry name" value="importin-11 isoform X1"/>
    <property type="match status" value="1"/>
</dbReference>
<dbReference type="Gene3D" id="1.25.10.10">
    <property type="entry name" value="Leucine-rich Repeat Variant"/>
    <property type="match status" value="1"/>
</dbReference>
<dbReference type="InterPro" id="IPR011989">
    <property type="entry name" value="ARM-like"/>
</dbReference>
<dbReference type="InterPro" id="IPR016024">
    <property type="entry name" value="ARM-type_fold"/>
</dbReference>
<dbReference type="InterPro" id="IPR001494">
    <property type="entry name" value="Importin-beta_N"/>
</dbReference>
<dbReference type="PANTHER" id="PTHR10997:SF7">
    <property type="entry name" value="IMPORTIN-11"/>
    <property type="match status" value="1"/>
</dbReference>
<dbReference type="PANTHER" id="PTHR10997">
    <property type="entry name" value="IMPORTIN-7, 8, 11"/>
    <property type="match status" value="1"/>
</dbReference>
<dbReference type="Pfam" id="PF03810">
    <property type="entry name" value="IBN_N"/>
    <property type="match status" value="1"/>
</dbReference>
<dbReference type="SMART" id="SM00913">
    <property type="entry name" value="IBN_N"/>
    <property type="match status" value="1"/>
</dbReference>
<dbReference type="SUPFAM" id="SSF48371">
    <property type="entry name" value="ARM repeat"/>
    <property type="match status" value="1"/>
</dbReference>
<dbReference type="PROSITE" id="PS50166">
    <property type="entry name" value="IMPORTIN_B_NT"/>
    <property type="match status" value="1"/>
</dbReference>
<protein>
    <recommendedName>
        <fullName>Importin-11</fullName>
        <shortName>Imp11</shortName>
    </recommendedName>
    <alternativeName>
        <fullName>Ran-binding protein 11</fullName>
        <shortName>RanBP11</shortName>
    </alternativeName>
</protein>
<organism>
    <name type="scientific">Mus musculus</name>
    <name type="common">Mouse</name>
    <dbReference type="NCBI Taxonomy" id="10090"/>
    <lineage>
        <taxon>Eukaryota</taxon>
        <taxon>Metazoa</taxon>
        <taxon>Chordata</taxon>
        <taxon>Craniata</taxon>
        <taxon>Vertebrata</taxon>
        <taxon>Euteleostomi</taxon>
        <taxon>Mammalia</taxon>
        <taxon>Eutheria</taxon>
        <taxon>Euarchontoglires</taxon>
        <taxon>Glires</taxon>
        <taxon>Rodentia</taxon>
        <taxon>Myomorpha</taxon>
        <taxon>Muroidea</taxon>
        <taxon>Muridae</taxon>
        <taxon>Murinae</taxon>
        <taxon>Mus</taxon>
        <taxon>Mus</taxon>
    </lineage>
</organism>
<proteinExistence type="evidence at protein level"/>
<evidence type="ECO:0000250" key="1"/>
<evidence type="ECO:0000250" key="2">
    <source>
        <dbReference type="UniProtKB" id="Q9UI26"/>
    </source>
</evidence>
<evidence type="ECO:0000255" key="3">
    <source>
        <dbReference type="PROSITE-ProRule" id="PRU00115"/>
    </source>
</evidence>
<evidence type="ECO:0000269" key="4">
    <source>
    </source>
</evidence>
<evidence type="ECO:0000303" key="5">
    <source>
    </source>
</evidence>
<evidence type="ECO:0000305" key="6"/>
<name>IPO11_MOUSE</name>
<feature type="chain" id="PRO_0000120757" description="Importin-11">
    <location>
        <begin position="1"/>
        <end position="975"/>
    </location>
</feature>
<feature type="domain" description="Importin N-terminal" evidence="3">
    <location>
        <begin position="28"/>
        <end position="100"/>
    </location>
</feature>
<feature type="repeat" description="HEAT 1">
    <location>
        <begin position="123"/>
        <end position="160"/>
    </location>
</feature>
<feature type="repeat" description="HEAT 2">
    <location>
        <begin position="283"/>
        <end position="317"/>
    </location>
</feature>
<feature type="repeat" description="HEAT 3">
    <location>
        <begin position="318"/>
        <end position="356"/>
    </location>
</feature>
<feature type="repeat" description="HEAT 4">
    <location>
        <begin position="422"/>
        <end position="459"/>
    </location>
</feature>
<feature type="repeat" description="HEAT 5">
    <location>
        <begin position="473"/>
        <end position="509"/>
    </location>
</feature>
<feature type="repeat" description="HEAT 6">
    <location>
        <begin position="511"/>
        <end position="548"/>
    </location>
</feature>
<feature type="repeat" description="HEAT 7">
    <location>
        <begin position="555"/>
        <end position="593"/>
    </location>
</feature>
<feature type="repeat" description="HEAT 8">
    <location>
        <begin position="600"/>
        <end position="636"/>
    </location>
</feature>
<feature type="repeat" description="HEAT 9">
    <location>
        <begin position="640"/>
        <end position="677"/>
    </location>
</feature>
<feature type="repeat" description="HEAT 10">
    <location>
        <begin position="683"/>
        <end position="720"/>
    </location>
</feature>
<feature type="repeat" description="HEAT 11">
    <location>
        <begin position="731"/>
        <end position="773"/>
    </location>
</feature>
<feature type="repeat" description="HEAT 12">
    <location>
        <begin position="819"/>
        <end position="849"/>
    </location>
</feature>
<feature type="repeat" description="HEAT 13">
    <location>
        <begin position="850"/>
        <end position="887"/>
    </location>
</feature>
<feature type="repeat" description="HEAT 14">
    <location>
        <begin position="957"/>
        <end position="974"/>
    </location>
</feature>
<feature type="modified residue" description="N-acetylmethionine" evidence="2">
    <location>
        <position position="1"/>
    </location>
</feature>
<feature type="modified residue" description="Phosphoserine" evidence="2">
    <location>
        <position position="343"/>
    </location>
</feature>
<feature type="splice variant" id="VSP_010935" description="In isoform 2." evidence="5">
    <original>L</original>
    <variation>LPSSCLANEL</variation>
    <location>
        <position position="698"/>
    </location>
</feature>
<feature type="sequence conflict" description="In Ref. 2; BAC40005." evidence="6" ref="2">
    <original>A</original>
    <variation>V</variation>
    <location>
        <position position="349"/>
    </location>
</feature>